<sequence length="204" mass="23592">MTNTIDFKHVEKNARIRDFENEKEKFKQDHNGINQEEVNQAMQVLSKATGGKEIFIGTKRSPQSKVKFAQFIQDNWDYALENAFFTDEEMLFLLRIQRFLQFKSNCIVNDIHSRNALPMSQKQIADRLKTDKSKISRIVNSLVQKGVIVKANGHKPEGVKARTYALFINPNIIYSGERDNVETTLKALFMNSKSLFKKFPIALF</sequence>
<proteinExistence type="predicted"/>
<accession>P10022</accession>
<name>YGI1_BACTU</name>
<reference key="1">
    <citation type="journal article" date="1988" name="Nucleic Acids Res.">
        <title>Complete nucleotide sequence of pGI2, a Bacillus thuringiensis plasmid containing Tn4430.</title>
        <authorList>
            <person name="Mahillon J."/>
            <person name="Seurinck J."/>
        </authorList>
    </citation>
    <scope>NUCLEOTIDE SEQUENCE [GENOMIC DNA]</scope>
    <source>
        <strain>H1.1</strain>
    </source>
</reference>
<reference key="2">
    <citation type="submission" date="1998-03" db="EMBL/GenBank/DDBJ databases">
        <authorList>
            <person name="Hoflack L."/>
        </authorList>
    </citation>
    <scope>SEQUENCE REVISION</scope>
</reference>
<comment type="function">
    <text>Possibly involved in pGI2 replication mechanism.</text>
</comment>
<geneLocation type="plasmid">
    <name>pGI2</name>
</geneLocation>
<organism>
    <name type="scientific">Bacillus thuringiensis</name>
    <dbReference type="NCBI Taxonomy" id="1428"/>
    <lineage>
        <taxon>Bacteria</taxon>
        <taxon>Bacillati</taxon>
        <taxon>Bacillota</taxon>
        <taxon>Bacilli</taxon>
        <taxon>Bacillales</taxon>
        <taxon>Bacillaceae</taxon>
        <taxon>Bacillus</taxon>
        <taxon>Bacillus cereus group</taxon>
    </lineage>
</organism>
<keyword id="KW-0614">Plasmid</keyword>
<feature type="chain" id="PRO_0000066228" description="Uncharacterized 23.6 kDa protein">
    <location>
        <begin position="1"/>
        <end position="204"/>
    </location>
</feature>
<protein>
    <recommendedName>
        <fullName>Uncharacterized 23.6 kDa protein</fullName>
    </recommendedName>
    <alternativeName>
        <fullName>ORF 1</fullName>
    </alternativeName>
</protein>
<dbReference type="EMBL" id="X13481">
    <property type="protein sequence ID" value="CAA31836.1"/>
    <property type="molecule type" value="Genomic_DNA"/>
</dbReference>
<dbReference type="RefSeq" id="WP_000185569.1">
    <property type="nucleotide sequence ID" value="NZ_VLJE01000060.1"/>
</dbReference>
<dbReference type="GeneID" id="67470635"/>
<dbReference type="GO" id="GO:0003700">
    <property type="term" value="F:DNA-binding transcription factor activity"/>
    <property type="evidence" value="ECO:0007669"/>
    <property type="project" value="InterPro"/>
</dbReference>
<dbReference type="Gene3D" id="1.10.10.10">
    <property type="entry name" value="Winged helix-like DNA-binding domain superfamily/Winged helix DNA-binding domain"/>
    <property type="match status" value="1"/>
</dbReference>
<dbReference type="InterPro" id="IPR000835">
    <property type="entry name" value="HTH_MarR-typ"/>
</dbReference>
<dbReference type="InterPro" id="IPR036388">
    <property type="entry name" value="WH-like_DNA-bd_sf"/>
</dbReference>
<dbReference type="InterPro" id="IPR036390">
    <property type="entry name" value="WH_DNA-bd_sf"/>
</dbReference>
<dbReference type="Pfam" id="PF12802">
    <property type="entry name" value="MarR_2"/>
    <property type="match status" value="1"/>
</dbReference>
<dbReference type="SUPFAM" id="SSF46785">
    <property type="entry name" value="Winged helix' DNA-binding domain"/>
    <property type="match status" value="1"/>
</dbReference>